<comment type="function">
    <text evidence="1">APOE is an apolipoprotein, a protein associating with lipid particles, that mainly functions in lipoprotein-mediated lipid transport between organs via the plasma and interstitial fluids. APOE is a core component of plasma lipoproteins and is involved in their production, conversion and clearance. Apolipoproteins are amphipathic molecules that interact both with lipids of the lipoprotein particle core and the aqueous environment of the plasma. As such, APOE associates with chylomicrons, chylomicron remnants, very low density lipoproteins (VLDL) and intermediate density lipoproteins (IDL) but shows a preferential binding to high-density lipoproteins (HDL). It also binds a wide range of cellular receptors including the LDL receptor/LDLR, the LDL receptor-related proteins LRP1, LRP2 and LRP8 and the very low-density lipoprotein receptor/VLDLR that mediate the cellular uptake of the APOE-containing lipoprotein particles. Finally, APOE also has a heparin-binding activity and binds heparan-sulfate proteoglycans on the surface of cells, a property that supports the capture and the receptor-mediated uptake of APOE-containing lipoproteins by cells. A main function of APOE is to mediate lipoprotein clearance through the uptake of chylomicrons, VLDLs, and HDLs by hepatocytes. APOE is also involved in the biosynthesis by the liver of VLDLs as well as their uptake by peripheral tissues ensuring the delivery of triglycerides and energy storage in muscle, heart and adipose tissues. By participating in the lipoprotein-mediated distribution of lipids among tissues, APOE plays a critical role in plasma and tissues lipid homeostasis. APOE is also involved in two steps of reverse cholesterol transport, the HDLs-mediated transport of cholesterol from peripheral tissues to the liver, and thereby plays an important role in cholesterol homeostasis. First, it is functionally associated with ABCA1 in the biogenesis of HDLs in tissues. Second, it is enriched in circulating HDLs and mediates their uptake by hepatocytes. APOE also plays an important role in lipid transport in the central nervous system, regulating neuron survival and sprouting.</text>
</comment>
<comment type="subunit">
    <text evidence="1">Homotetramer. May interact with ABCA1; functionally associated with ABCA1 in the biogenesis of HDLs. May interact with APP/A4 amyloid-beta peptide; the interaction is extremely stable in vitro but its physiological significance is unclear. May interact with MAPT. May interact with MAP2. In the cerebrospinal fluid, interacts with secreted SORL1. Interacts with PMEL; this allows the loading of PMEL luminal fragment on ILVs to induce fibril nucleation.</text>
</comment>
<comment type="subcellular location">
    <subcellularLocation>
        <location evidence="1">Secreted</location>
    </subcellularLocation>
    <subcellularLocation>
        <location evidence="1">Secreted</location>
        <location evidence="1">Extracellular space</location>
    </subcellularLocation>
    <subcellularLocation>
        <location evidence="1">Secreted</location>
        <location evidence="1">Extracellular space</location>
        <location evidence="1">Extracellular matrix</location>
    </subcellularLocation>
    <subcellularLocation>
        <location evidence="1">Extracellular vesicle</location>
    </subcellularLocation>
    <subcellularLocation>
        <location evidence="1">Endosome</location>
        <location evidence="1">Multivesicular body</location>
    </subcellularLocation>
    <text evidence="1">In the plasma, APOE is associated with chylomicrons, chylomicrons remnants, VLDL, LDL and HDL lipoproteins. Lipid poor oligomeric APOE is associated with the extracellular matrix in a calcium- and heparan-sulfate proteoglycans-dependent manner. Lipidation induces the release from the extracellular matrix. Colocalizes with CD63 and PMEL at exosomes and in intraluminal vesicles within multivesicular endosomes.</text>
</comment>
<comment type="PTM">
    <text evidence="1">APOE exists as multiple glycosylated and sialylated glycoforms within cells and in plasma. The extent of glycosylation and sialylation are tissue and context specific.</text>
</comment>
<comment type="PTM">
    <text evidence="1">Glycated in plasma VLDL.</text>
</comment>
<comment type="PTM">
    <text evidence="1">Phosphorylated by FAM20C in the extracellular medium.</text>
</comment>
<comment type="similarity">
    <text evidence="4">Belongs to the apolipoprotein A1/A4/E family.</text>
</comment>
<sequence>MKALWAVLLATLLTGCLSEGEPEVTEQLSWQSDQPWEQALNRFWDYLRWVQTLSDQVQEELQNSQVTQELTVLMEDTMTEVKAYKKELEEQLGPVAEETRARLAKEVQAAQARLGADMEDLRNRLAQYRNEVHTMLGQSTEELRSRLSSHLRKMRKRLMRDAEDLQKRLAVYKAGAREGAERGVSAIRERLGPLVEQGRQRTANLGAGVAQPLRDRAQALGDRLRGRLEEVGNQARDRLEEMREHMEEVRSKMEEQTQQIRLQAEIFQARLKGWFEPLVEDMQRQLANLVEKIQASTNSVLSTSVPQENQ</sequence>
<accession>P0DUY9</accession>
<protein>
    <recommendedName>
        <fullName>Apolipoprotein E</fullName>
        <shortName>Apo-E</shortName>
    </recommendedName>
</protein>
<name>APOE_GRASU</name>
<feature type="signal peptide" evidence="3">
    <location>
        <begin position="1"/>
        <end position="18"/>
    </location>
</feature>
<feature type="chain" id="PRO_0000454013" description="Apolipoprotein E">
    <location>
        <begin position="19"/>
        <end position="310"/>
    </location>
</feature>
<feature type="repeat" description="1">
    <location>
        <begin position="72"/>
        <end position="93"/>
    </location>
</feature>
<feature type="repeat" description="2">
    <location>
        <begin position="94"/>
        <end position="115"/>
    </location>
</feature>
<feature type="repeat" description="3">
    <location>
        <begin position="116"/>
        <end position="137"/>
    </location>
</feature>
<feature type="repeat" description="4">
    <location>
        <begin position="138"/>
        <end position="159"/>
    </location>
</feature>
<feature type="repeat" description="5">
    <location>
        <begin position="160"/>
        <end position="181"/>
    </location>
</feature>
<feature type="repeat" description="6">
    <location>
        <begin position="182"/>
        <end position="203"/>
    </location>
</feature>
<feature type="repeat" description="7">
    <location>
        <begin position="204"/>
        <end position="225"/>
    </location>
</feature>
<feature type="repeat" description="8">
    <location>
        <begin position="226"/>
        <end position="247"/>
    </location>
</feature>
<feature type="region of interest" description="8 X 22 AA approximate tandem repeats">
    <location>
        <begin position="72"/>
        <end position="247"/>
    </location>
</feature>
<feature type="region of interest" description="LDL and other lipoprotein receptors binding" evidence="1">
    <location>
        <begin position="150"/>
        <end position="160"/>
    </location>
</feature>
<feature type="region of interest" description="LDL receptor binding" evidence="1">
    <location>
        <begin position="150"/>
        <end position="160"/>
    </location>
</feature>
<feature type="region of interest" description="Lipid-binding and lipoprotein association" evidence="1">
    <location>
        <begin position="202"/>
        <end position="282"/>
    </location>
</feature>
<feature type="region of interest" description="Homooligomerization" evidence="1">
    <location>
        <begin position="258"/>
        <end position="310"/>
    </location>
</feature>
<feature type="region of interest" description="Specificity for association with VLDL" evidence="1">
    <location>
        <begin position="270"/>
        <end position="282"/>
    </location>
</feature>
<feature type="binding site" evidence="1">
    <location>
        <begin position="154"/>
        <end position="157"/>
    </location>
    <ligand>
        <name>heparin</name>
        <dbReference type="ChEBI" id="CHEBI:28304"/>
    </ligand>
</feature>
<feature type="binding site" evidence="1">
    <location>
        <begin position="221"/>
        <end position="228"/>
    </location>
    <ligand>
        <name>heparin</name>
        <dbReference type="ChEBI" id="CHEBI:28304"/>
    </ligand>
</feature>
<feature type="modified residue" description="Methionine sulfoxide" evidence="2">
    <location>
        <position position="135"/>
    </location>
</feature>
<keyword id="KW-0162">Chylomicron</keyword>
<keyword id="KW-0967">Endosome</keyword>
<keyword id="KW-0272">Extracellular matrix</keyword>
<keyword id="KW-0325">Glycoprotein</keyword>
<keyword id="KW-0345">HDL</keyword>
<keyword id="KW-0358">Heparin-binding</keyword>
<keyword id="KW-0445">Lipid transport</keyword>
<keyword id="KW-0446">Lipid-binding</keyword>
<keyword id="KW-0558">Oxidation</keyword>
<keyword id="KW-0597">Phosphoprotein</keyword>
<keyword id="KW-0677">Repeat</keyword>
<keyword id="KW-0964">Secreted</keyword>
<keyword id="KW-0732">Signal</keyword>
<keyword id="KW-0813">Transport</keyword>
<keyword id="KW-0850">VLDL</keyword>
<evidence type="ECO:0000250" key="1">
    <source>
        <dbReference type="UniProtKB" id="P02649"/>
    </source>
</evidence>
<evidence type="ECO:0000250" key="2">
    <source>
        <dbReference type="UniProtKB" id="P08226"/>
    </source>
</evidence>
<evidence type="ECO:0000255" key="3"/>
<evidence type="ECO:0000305" key="4"/>
<organism>
    <name type="scientific">Grammomys surdaster</name>
    <name type="common">African woodland thicket rat</name>
    <name type="synonym">Thamnomys surdaster</name>
    <dbReference type="NCBI Taxonomy" id="491861"/>
    <lineage>
        <taxon>Eukaryota</taxon>
        <taxon>Metazoa</taxon>
        <taxon>Chordata</taxon>
        <taxon>Craniata</taxon>
        <taxon>Vertebrata</taxon>
        <taxon>Euteleostomi</taxon>
        <taxon>Mammalia</taxon>
        <taxon>Eutheria</taxon>
        <taxon>Euarchontoglires</taxon>
        <taxon>Glires</taxon>
        <taxon>Rodentia</taxon>
        <taxon>Myomorpha</taxon>
        <taxon>Muroidea</taxon>
        <taxon>Muridae</taxon>
        <taxon>Murinae</taxon>
        <taxon>Grammomys</taxon>
    </lineage>
</organism>
<reference key="1">
    <citation type="submission" date="2019-04" db="EMBL/GenBank/DDBJ databases">
        <title>African thicket rat Grammomys surdaster (dolichurus), natural host of rodent malaria parasites, TR1022 genome assembly.</title>
        <authorList>
            <person name="Mullikin J."/>
            <person name="Morrison R."/>
            <person name="Duffy P."/>
        </authorList>
    </citation>
    <scope>NUCLEOTIDE SEQUENCE [LARGE SCALE GENOMIC DNA]</scope>
    <source>
        <tissue>Brain</tissue>
    </source>
</reference>
<reference key="2">
    <citation type="unpublished observations" date="2021-07">
        <authorList>
            <person name="Puppione D.L."/>
        </authorList>
    </citation>
    <scope>IDENTIFICATION</scope>
</reference>
<dbReference type="EMBL" id="SRMG01000208">
    <property type="status" value="NOT_ANNOTATED_CDS"/>
    <property type="molecule type" value="Genomic_DNA"/>
</dbReference>
<dbReference type="RefSeq" id="XP_028634539.1">
    <property type="nucleotide sequence ID" value="XM_028778706.1"/>
</dbReference>
<dbReference type="SMR" id="P0DUY9"/>
<dbReference type="GeneID" id="114630468"/>
<dbReference type="GO" id="GO:0042627">
    <property type="term" value="C:chylomicron"/>
    <property type="evidence" value="ECO:0007669"/>
    <property type="project" value="UniProtKB-KW"/>
</dbReference>
<dbReference type="GO" id="GO:0070062">
    <property type="term" value="C:extracellular exosome"/>
    <property type="evidence" value="ECO:0000250"/>
    <property type="project" value="UniProtKB"/>
</dbReference>
<dbReference type="GO" id="GO:0034364">
    <property type="term" value="C:high-density lipoprotein particle"/>
    <property type="evidence" value="ECO:0007669"/>
    <property type="project" value="UniProtKB-KW"/>
</dbReference>
<dbReference type="GO" id="GO:0034362">
    <property type="term" value="C:low-density lipoprotein particle"/>
    <property type="evidence" value="ECO:0007669"/>
    <property type="project" value="TreeGrafter"/>
</dbReference>
<dbReference type="GO" id="GO:0097487">
    <property type="term" value="C:multivesicular body, internal vesicle"/>
    <property type="evidence" value="ECO:0000250"/>
    <property type="project" value="UniProtKB"/>
</dbReference>
<dbReference type="GO" id="GO:0034361">
    <property type="term" value="C:very-low-density lipoprotein particle"/>
    <property type="evidence" value="ECO:0007669"/>
    <property type="project" value="UniProtKB-KW"/>
</dbReference>
<dbReference type="GO" id="GO:0120020">
    <property type="term" value="F:cholesterol transfer activity"/>
    <property type="evidence" value="ECO:0007669"/>
    <property type="project" value="TreeGrafter"/>
</dbReference>
<dbReference type="GO" id="GO:0008201">
    <property type="term" value="F:heparin binding"/>
    <property type="evidence" value="ECO:0007669"/>
    <property type="project" value="UniProtKB-KW"/>
</dbReference>
<dbReference type="GO" id="GO:0060228">
    <property type="term" value="F:phosphatidylcholine-sterol O-acyltransferase activator activity"/>
    <property type="evidence" value="ECO:0007669"/>
    <property type="project" value="TreeGrafter"/>
</dbReference>
<dbReference type="GO" id="GO:0005543">
    <property type="term" value="F:phospholipid binding"/>
    <property type="evidence" value="ECO:0007669"/>
    <property type="project" value="TreeGrafter"/>
</dbReference>
<dbReference type="GO" id="GO:0055090">
    <property type="term" value="P:acylglycerol homeostasis"/>
    <property type="evidence" value="ECO:0007669"/>
    <property type="project" value="TreeGrafter"/>
</dbReference>
<dbReference type="GO" id="GO:0033344">
    <property type="term" value="P:cholesterol efflux"/>
    <property type="evidence" value="ECO:0007669"/>
    <property type="project" value="TreeGrafter"/>
</dbReference>
<dbReference type="GO" id="GO:0008203">
    <property type="term" value="P:cholesterol metabolic process"/>
    <property type="evidence" value="ECO:0007669"/>
    <property type="project" value="TreeGrafter"/>
</dbReference>
<dbReference type="GO" id="GO:0042157">
    <property type="term" value="P:lipoprotein metabolic process"/>
    <property type="evidence" value="ECO:0007669"/>
    <property type="project" value="InterPro"/>
</dbReference>
<dbReference type="GO" id="GO:0032438">
    <property type="term" value="P:melanosome organization"/>
    <property type="evidence" value="ECO:0000250"/>
    <property type="project" value="UniProtKB"/>
</dbReference>
<dbReference type="GO" id="GO:0033700">
    <property type="term" value="P:phospholipid efflux"/>
    <property type="evidence" value="ECO:0007669"/>
    <property type="project" value="TreeGrafter"/>
</dbReference>
<dbReference type="FunFam" id="1.20.120.20:FF:000002">
    <property type="entry name" value="Apolipoprotein E"/>
    <property type="match status" value="1"/>
</dbReference>
<dbReference type="FunFam" id="1.20.120.20:FF:000003">
    <property type="entry name" value="Apolipoprotein E"/>
    <property type="match status" value="1"/>
</dbReference>
<dbReference type="Gene3D" id="1.20.120.20">
    <property type="entry name" value="Apolipoprotein"/>
    <property type="match status" value="2"/>
</dbReference>
<dbReference type="InterPro" id="IPR000074">
    <property type="entry name" value="ApoA_E"/>
</dbReference>
<dbReference type="InterPro" id="IPR050163">
    <property type="entry name" value="Apolipoprotein_A1/A4/E"/>
</dbReference>
<dbReference type="PANTHER" id="PTHR18976">
    <property type="entry name" value="APOLIPOPROTEIN"/>
    <property type="match status" value="1"/>
</dbReference>
<dbReference type="PANTHER" id="PTHR18976:SF2">
    <property type="entry name" value="APOLIPOPROTEIN E"/>
    <property type="match status" value="1"/>
</dbReference>
<dbReference type="Pfam" id="PF01442">
    <property type="entry name" value="Apolipoprotein"/>
    <property type="match status" value="1"/>
</dbReference>
<dbReference type="SUPFAM" id="SSF58113">
    <property type="entry name" value="Apolipoprotein A-I"/>
    <property type="match status" value="1"/>
</dbReference>
<gene>
    <name type="primary">Apoe</name>
</gene>
<proteinExistence type="inferred from homology"/>